<proteinExistence type="inferred from homology"/>
<keyword id="KW-0687">Ribonucleoprotein</keyword>
<keyword id="KW-0689">Ribosomal protein</keyword>
<protein>
    <recommendedName>
        <fullName evidence="1">Large ribosomal subunit protein bL27</fullName>
    </recommendedName>
    <alternativeName>
        <fullName evidence="2">50S ribosomal protein L27</fullName>
    </alternativeName>
</protein>
<feature type="chain" id="PRO_1000017581" description="Large ribosomal subunit protein bL27">
    <location>
        <begin position="1"/>
        <end position="89"/>
    </location>
</feature>
<reference key="1">
    <citation type="submission" date="2007-02" db="EMBL/GenBank/DDBJ databases">
        <title>Complete sequence of chromosome 2 of Rhodobacter sphaeroides ATCC 17029.</title>
        <authorList>
            <person name="Copeland A."/>
            <person name="Lucas S."/>
            <person name="Lapidus A."/>
            <person name="Barry K."/>
            <person name="Detter J.C."/>
            <person name="Glavina del Rio T."/>
            <person name="Hammon N."/>
            <person name="Israni S."/>
            <person name="Dalin E."/>
            <person name="Tice H."/>
            <person name="Pitluck S."/>
            <person name="Kiss H."/>
            <person name="Brettin T."/>
            <person name="Bruce D."/>
            <person name="Han C."/>
            <person name="Tapia R."/>
            <person name="Gilna P."/>
            <person name="Schmutz J."/>
            <person name="Larimer F."/>
            <person name="Land M."/>
            <person name="Hauser L."/>
            <person name="Kyrpides N."/>
            <person name="Mikhailova N."/>
            <person name="Richardson P."/>
            <person name="Mackenzie C."/>
            <person name="Choudhary M."/>
            <person name="Donohue T.J."/>
            <person name="Kaplan S."/>
        </authorList>
    </citation>
    <scope>NUCLEOTIDE SEQUENCE [LARGE SCALE GENOMIC DNA]</scope>
    <source>
        <strain>ATCC 17029 / ATH 2.4.9</strain>
    </source>
</reference>
<sequence length="89" mass="9410">MAHKKAGGSSRNGRDSAGRRLGVKLYGGQAAIPGNIIVRQRGTTWFPGAGVGMGRDHTIFATVEGRVEFRKGLKGRTFISVLPTAEAAE</sequence>
<comment type="similarity">
    <text evidence="1">Belongs to the bacterial ribosomal protein bL27 family.</text>
</comment>
<organism>
    <name type="scientific">Cereibacter sphaeroides (strain ATCC 17029 / ATH 2.4.9)</name>
    <name type="common">Rhodobacter sphaeroides</name>
    <dbReference type="NCBI Taxonomy" id="349101"/>
    <lineage>
        <taxon>Bacteria</taxon>
        <taxon>Pseudomonadati</taxon>
        <taxon>Pseudomonadota</taxon>
        <taxon>Alphaproteobacteria</taxon>
        <taxon>Rhodobacterales</taxon>
        <taxon>Paracoccaceae</taxon>
        <taxon>Cereibacter</taxon>
    </lineage>
</organism>
<name>RL27_CERS1</name>
<accession>A3PQI8</accession>
<evidence type="ECO:0000255" key="1">
    <source>
        <dbReference type="HAMAP-Rule" id="MF_00539"/>
    </source>
</evidence>
<evidence type="ECO:0000305" key="2"/>
<gene>
    <name evidence="1" type="primary">rpmA</name>
    <name type="ordered locus">Rsph17029_3512</name>
</gene>
<dbReference type="EMBL" id="CP000578">
    <property type="protein sequence ID" value="ABN78604.1"/>
    <property type="molecule type" value="Genomic_DNA"/>
</dbReference>
<dbReference type="RefSeq" id="WP_002723383.1">
    <property type="nucleotide sequence ID" value="NC_009050.1"/>
</dbReference>
<dbReference type="SMR" id="A3PQI8"/>
<dbReference type="GeneID" id="67448501"/>
<dbReference type="KEGG" id="rsh:Rsph17029_3512"/>
<dbReference type="HOGENOM" id="CLU_095424_4_1_5"/>
<dbReference type="GO" id="GO:0022625">
    <property type="term" value="C:cytosolic large ribosomal subunit"/>
    <property type="evidence" value="ECO:0007669"/>
    <property type="project" value="TreeGrafter"/>
</dbReference>
<dbReference type="GO" id="GO:0003735">
    <property type="term" value="F:structural constituent of ribosome"/>
    <property type="evidence" value="ECO:0007669"/>
    <property type="project" value="InterPro"/>
</dbReference>
<dbReference type="GO" id="GO:0006412">
    <property type="term" value="P:translation"/>
    <property type="evidence" value="ECO:0007669"/>
    <property type="project" value="UniProtKB-UniRule"/>
</dbReference>
<dbReference type="FunFam" id="2.40.50.100:FF:000060">
    <property type="entry name" value="Apicoplast ribosomal protein L27"/>
    <property type="match status" value="1"/>
</dbReference>
<dbReference type="Gene3D" id="2.40.50.100">
    <property type="match status" value="1"/>
</dbReference>
<dbReference type="HAMAP" id="MF_00539">
    <property type="entry name" value="Ribosomal_bL27"/>
    <property type="match status" value="1"/>
</dbReference>
<dbReference type="InterPro" id="IPR001684">
    <property type="entry name" value="Ribosomal_bL27"/>
</dbReference>
<dbReference type="InterPro" id="IPR018261">
    <property type="entry name" value="Ribosomal_bL27_CS"/>
</dbReference>
<dbReference type="NCBIfam" id="TIGR00062">
    <property type="entry name" value="L27"/>
    <property type="match status" value="1"/>
</dbReference>
<dbReference type="PANTHER" id="PTHR15893:SF0">
    <property type="entry name" value="LARGE RIBOSOMAL SUBUNIT PROTEIN BL27M"/>
    <property type="match status" value="1"/>
</dbReference>
<dbReference type="PANTHER" id="PTHR15893">
    <property type="entry name" value="RIBOSOMAL PROTEIN L27"/>
    <property type="match status" value="1"/>
</dbReference>
<dbReference type="Pfam" id="PF01016">
    <property type="entry name" value="Ribosomal_L27"/>
    <property type="match status" value="1"/>
</dbReference>
<dbReference type="PRINTS" id="PR00063">
    <property type="entry name" value="RIBOSOMALL27"/>
</dbReference>
<dbReference type="SUPFAM" id="SSF110324">
    <property type="entry name" value="Ribosomal L27 protein-like"/>
    <property type="match status" value="1"/>
</dbReference>
<dbReference type="PROSITE" id="PS00831">
    <property type="entry name" value="RIBOSOMAL_L27"/>
    <property type="match status" value="1"/>
</dbReference>